<accession>B1VEY0</accession>
<protein>
    <recommendedName>
        <fullName evidence="1">Small ribosomal subunit protein uS11</fullName>
    </recommendedName>
    <alternativeName>
        <fullName evidence="2">30S ribosomal protein S11</fullName>
    </alternativeName>
</protein>
<keyword id="KW-1185">Reference proteome</keyword>
<keyword id="KW-0687">Ribonucleoprotein</keyword>
<keyword id="KW-0689">Ribosomal protein</keyword>
<keyword id="KW-0694">RNA-binding</keyword>
<keyword id="KW-0699">rRNA-binding</keyword>
<evidence type="ECO:0000255" key="1">
    <source>
        <dbReference type="HAMAP-Rule" id="MF_01310"/>
    </source>
</evidence>
<evidence type="ECO:0000305" key="2"/>
<name>RS11_CORU7</name>
<reference key="1">
    <citation type="journal article" date="2008" name="J. Biotechnol.">
        <title>The lifestyle of Corynebacterium urealyticum derived from its complete genome sequence established by pyrosequencing.</title>
        <authorList>
            <person name="Tauch A."/>
            <person name="Trost E."/>
            <person name="Tilker A."/>
            <person name="Ludewig U."/>
            <person name="Schneiker S."/>
            <person name="Goesmann A."/>
            <person name="Arnold W."/>
            <person name="Bekel T."/>
            <person name="Brinkrolf K."/>
            <person name="Brune I."/>
            <person name="Goetker S."/>
            <person name="Kalinowski J."/>
            <person name="Kamp P.-B."/>
            <person name="Lobo F.P."/>
            <person name="Viehoever P."/>
            <person name="Weisshaar B."/>
            <person name="Soriano F."/>
            <person name="Droege M."/>
            <person name="Puehler A."/>
        </authorList>
    </citation>
    <scope>NUCLEOTIDE SEQUENCE [LARGE SCALE GENOMIC DNA]</scope>
    <source>
        <strain>ATCC 43042 / DSM 7109</strain>
    </source>
</reference>
<comment type="function">
    <text evidence="1">Located on the platform of the 30S subunit, it bridges several disparate RNA helices of the 16S rRNA. Forms part of the Shine-Dalgarno cleft in the 70S ribosome.</text>
</comment>
<comment type="subunit">
    <text evidence="1">Part of the 30S ribosomal subunit. Interacts with proteins S7 and S18. Binds to IF-3.</text>
</comment>
<comment type="similarity">
    <text evidence="1">Belongs to the universal ribosomal protein uS11 family.</text>
</comment>
<dbReference type="EMBL" id="AM942444">
    <property type="protein sequence ID" value="CAQ04319.1"/>
    <property type="molecule type" value="Genomic_DNA"/>
</dbReference>
<dbReference type="RefSeq" id="WP_012359612.1">
    <property type="nucleotide sequence ID" value="NC_010545.1"/>
</dbReference>
<dbReference type="SMR" id="B1VEY0"/>
<dbReference type="STRING" id="504474.cu0359"/>
<dbReference type="GeneID" id="60605162"/>
<dbReference type="KEGG" id="cur:cu0359"/>
<dbReference type="eggNOG" id="COG0100">
    <property type="taxonomic scope" value="Bacteria"/>
</dbReference>
<dbReference type="HOGENOM" id="CLU_072439_5_0_11"/>
<dbReference type="Proteomes" id="UP000001727">
    <property type="component" value="Chromosome"/>
</dbReference>
<dbReference type="GO" id="GO:1990904">
    <property type="term" value="C:ribonucleoprotein complex"/>
    <property type="evidence" value="ECO:0007669"/>
    <property type="project" value="UniProtKB-KW"/>
</dbReference>
<dbReference type="GO" id="GO:0005840">
    <property type="term" value="C:ribosome"/>
    <property type="evidence" value="ECO:0007669"/>
    <property type="project" value="UniProtKB-KW"/>
</dbReference>
<dbReference type="GO" id="GO:0019843">
    <property type="term" value="F:rRNA binding"/>
    <property type="evidence" value="ECO:0007669"/>
    <property type="project" value="UniProtKB-UniRule"/>
</dbReference>
<dbReference type="GO" id="GO:0003735">
    <property type="term" value="F:structural constituent of ribosome"/>
    <property type="evidence" value="ECO:0007669"/>
    <property type="project" value="InterPro"/>
</dbReference>
<dbReference type="GO" id="GO:0006412">
    <property type="term" value="P:translation"/>
    <property type="evidence" value="ECO:0007669"/>
    <property type="project" value="UniProtKB-UniRule"/>
</dbReference>
<dbReference type="FunFam" id="3.30.420.80:FF:000001">
    <property type="entry name" value="30S ribosomal protein S11"/>
    <property type="match status" value="1"/>
</dbReference>
<dbReference type="Gene3D" id="3.30.420.80">
    <property type="entry name" value="Ribosomal protein S11"/>
    <property type="match status" value="1"/>
</dbReference>
<dbReference type="HAMAP" id="MF_01310">
    <property type="entry name" value="Ribosomal_uS11"/>
    <property type="match status" value="1"/>
</dbReference>
<dbReference type="InterPro" id="IPR001971">
    <property type="entry name" value="Ribosomal_uS11"/>
</dbReference>
<dbReference type="InterPro" id="IPR019981">
    <property type="entry name" value="Ribosomal_uS11_bac-type"/>
</dbReference>
<dbReference type="InterPro" id="IPR018102">
    <property type="entry name" value="Ribosomal_uS11_CS"/>
</dbReference>
<dbReference type="InterPro" id="IPR036967">
    <property type="entry name" value="Ribosomal_uS11_sf"/>
</dbReference>
<dbReference type="NCBIfam" id="NF003698">
    <property type="entry name" value="PRK05309.1"/>
    <property type="match status" value="1"/>
</dbReference>
<dbReference type="NCBIfam" id="TIGR03632">
    <property type="entry name" value="uS11_bact"/>
    <property type="match status" value="1"/>
</dbReference>
<dbReference type="PANTHER" id="PTHR11759">
    <property type="entry name" value="40S RIBOSOMAL PROTEIN S14/30S RIBOSOMAL PROTEIN S11"/>
    <property type="match status" value="1"/>
</dbReference>
<dbReference type="Pfam" id="PF00411">
    <property type="entry name" value="Ribosomal_S11"/>
    <property type="match status" value="1"/>
</dbReference>
<dbReference type="PIRSF" id="PIRSF002131">
    <property type="entry name" value="Ribosomal_S11"/>
    <property type="match status" value="1"/>
</dbReference>
<dbReference type="SUPFAM" id="SSF53137">
    <property type="entry name" value="Translational machinery components"/>
    <property type="match status" value="1"/>
</dbReference>
<dbReference type="PROSITE" id="PS00054">
    <property type="entry name" value="RIBOSOMAL_S11"/>
    <property type="match status" value="1"/>
</dbReference>
<organism>
    <name type="scientific">Corynebacterium urealyticum (strain ATCC 43042 / DSM 7109)</name>
    <dbReference type="NCBI Taxonomy" id="504474"/>
    <lineage>
        <taxon>Bacteria</taxon>
        <taxon>Bacillati</taxon>
        <taxon>Actinomycetota</taxon>
        <taxon>Actinomycetes</taxon>
        <taxon>Mycobacteriales</taxon>
        <taxon>Corynebacteriaceae</taxon>
        <taxon>Corynebacterium</taxon>
    </lineage>
</organism>
<sequence length="135" mass="14422">MAAPKSTATRARRGRRVVKKNVTQGHAYIKSTFNNTIVSITDPKGHVISWASSGQVGFKGSRKSTPFAAQLAAESAARKAMEHGMKKVDVFVKGPGSGRETAIRSLSTAGLEVGTIADVTPQPHNGCRPPKRRRV</sequence>
<feature type="chain" id="PRO_1000214357" description="Small ribosomal subunit protein uS11">
    <location>
        <begin position="1"/>
        <end position="135"/>
    </location>
</feature>
<proteinExistence type="inferred from homology"/>
<gene>
    <name evidence="1" type="primary">rpsK</name>
    <name type="ordered locus">cu0359</name>
</gene>